<reference key="1">
    <citation type="journal article" date="2007" name="PLoS ONE">
        <title>Analysis of the neurotoxin complex genes in Clostridium botulinum A1-A4 and B1 strains: BoNT/A3, /Ba4 and /B1 clusters are located within plasmids.</title>
        <authorList>
            <person name="Smith T.J."/>
            <person name="Hill K.K."/>
            <person name="Foley B.T."/>
            <person name="Detter J.C."/>
            <person name="Munk A.C."/>
            <person name="Bruce D.C."/>
            <person name="Doggett N.A."/>
            <person name="Smith L.A."/>
            <person name="Marks J.D."/>
            <person name="Xie G."/>
            <person name="Brettin T.S."/>
        </authorList>
    </citation>
    <scope>NUCLEOTIDE SEQUENCE [LARGE SCALE GENOMIC DNA]</scope>
    <source>
        <strain>Okra / Type B1</strain>
    </source>
</reference>
<gene>
    <name evidence="1" type="primary">ribH</name>
    <name type="ordered locus">CLD_1679</name>
</gene>
<feature type="chain" id="PRO_1000098178" description="6,7-dimethyl-8-ribityllumazine synthase">
    <location>
        <begin position="1"/>
        <end position="154"/>
    </location>
</feature>
<feature type="active site" description="Proton donor" evidence="1">
    <location>
        <position position="88"/>
    </location>
</feature>
<feature type="binding site" evidence="1">
    <location>
        <position position="22"/>
    </location>
    <ligand>
        <name>5-amino-6-(D-ribitylamino)uracil</name>
        <dbReference type="ChEBI" id="CHEBI:15934"/>
    </ligand>
</feature>
<feature type="binding site" evidence="1">
    <location>
        <begin position="56"/>
        <end position="58"/>
    </location>
    <ligand>
        <name>5-amino-6-(D-ribitylamino)uracil</name>
        <dbReference type="ChEBI" id="CHEBI:15934"/>
    </ligand>
</feature>
<feature type="binding site" evidence="1">
    <location>
        <begin position="80"/>
        <end position="82"/>
    </location>
    <ligand>
        <name>5-amino-6-(D-ribitylamino)uracil</name>
        <dbReference type="ChEBI" id="CHEBI:15934"/>
    </ligand>
</feature>
<feature type="binding site" evidence="1">
    <location>
        <begin position="85"/>
        <end position="86"/>
    </location>
    <ligand>
        <name>(2S)-2-hydroxy-3-oxobutyl phosphate</name>
        <dbReference type="ChEBI" id="CHEBI:58830"/>
    </ligand>
</feature>
<feature type="binding site" evidence="1">
    <location>
        <position position="113"/>
    </location>
    <ligand>
        <name>5-amino-6-(D-ribitylamino)uracil</name>
        <dbReference type="ChEBI" id="CHEBI:15934"/>
    </ligand>
</feature>
<feature type="binding site" evidence="1">
    <location>
        <position position="127"/>
    </location>
    <ligand>
        <name>(2S)-2-hydroxy-3-oxobutyl phosphate</name>
        <dbReference type="ChEBI" id="CHEBI:58830"/>
    </ligand>
</feature>
<name>RISB_CLOBK</name>
<organism>
    <name type="scientific">Clostridium botulinum (strain Okra / Type B1)</name>
    <dbReference type="NCBI Taxonomy" id="498213"/>
    <lineage>
        <taxon>Bacteria</taxon>
        <taxon>Bacillati</taxon>
        <taxon>Bacillota</taxon>
        <taxon>Clostridia</taxon>
        <taxon>Eubacteriales</taxon>
        <taxon>Clostridiaceae</taxon>
        <taxon>Clostridium</taxon>
    </lineage>
</organism>
<evidence type="ECO:0000255" key="1">
    <source>
        <dbReference type="HAMAP-Rule" id="MF_00178"/>
    </source>
</evidence>
<dbReference type="EC" id="2.5.1.78" evidence="1"/>
<dbReference type="EMBL" id="CP000939">
    <property type="protein sequence ID" value="ACA44159.1"/>
    <property type="molecule type" value="Genomic_DNA"/>
</dbReference>
<dbReference type="RefSeq" id="WP_003403215.1">
    <property type="nucleotide sequence ID" value="NC_010516.1"/>
</dbReference>
<dbReference type="SMR" id="B1IL45"/>
<dbReference type="KEGG" id="cbb:CLD_1679"/>
<dbReference type="HOGENOM" id="CLU_089358_1_1_9"/>
<dbReference type="UniPathway" id="UPA00275">
    <property type="reaction ID" value="UER00404"/>
</dbReference>
<dbReference type="Proteomes" id="UP000008541">
    <property type="component" value="Chromosome"/>
</dbReference>
<dbReference type="GO" id="GO:0005829">
    <property type="term" value="C:cytosol"/>
    <property type="evidence" value="ECO:0007669"/>
    <property type="project" value="TreeGrafter"/>
</dbReference>
<dbReference type="GO" id="GO:0009349">
    <property type="term" value="C:riboflavin synthase complex"/>
    <property type="evidence" value="ECO:0007669"/>
    <property type="project" value="InterPro"/>
</dbReference>
<dbReference type="GO" id="GO:0000906">
    <property type="term" value="F:6,7-dimethyl-8-ribityllumazine synthase activity"/>
    <property type="evidence" value="ECO:0007669"/>
    <property type="project" value="UniProtKB-UniRule"/>
</dbReference>
<dbReference type="GO" id="GO:0009231">
    <property type="term" value="P:riboflavin biosynthetic process"/>
    <property type="evidence" value="ECO:0007669"/>
    <property type="project" value="UniProtKB-UniRule"/>
</dbReference>
<dbReference type="CDD" id="cd09209">
    <property type="entry name" value="Lumazine_synthase-I"/>
    <property type="match status" value="1"/>
</dbReference>
<dbReference type="FunFam" id="3.40.50.960:FF:000001">
    <property type="entry name" value="6,7-dimethyl-8-ribityllumazine synthase"/>
    <property type="match status" value="1"/>
</dbReference>
<dbReference type="Gene3D" id="3.40.50.960">
    <property type="entry name" value="Lumazine/riboflavin synthase"/>
    <property type="match status" value="1"/>
</dbReference>
<dbReference type="HAMAP" id="MF_00178">
    <property type="entry name" value="Lumazine_synth"/>
    <property type="match status" value="1"/>
</dbReference>
<dbReference type="InterPro" id="IPR034964">
    <property type="entry name" value="LS"/>
</dbReference>
<dbReference type="InterPro" id="IPR002180">
    <property type="entry name" value="LS/RS"/>
</dbReference>
<dbReference type="InterPro" id="IPR036467">
    <property type="entry name" value="LS/RS_sf"/>
</dbReference>
<dbReference type="NCBIfam" id="TIGR00114">
    <property type="entry name" value="lumazine-synth"/>
    <property type="match status" value="1"/>
</dbReference>
<dbReference type="NCBIfam" id="NF000812">
    <property type="entry name" value="PRK00061.1-4"/>
    <property type="match status" value="1"/>
</dbReference>
<dbReference type="PANTHER" id="PTHR21058:SF0">
    <property type="entry name" value="6,7-DIMETHYL-8-RIBITYLLUMAZINE SYNTHASE"/>
    <property type="match status" value="1"/>
</dbReference>
<dbReference type="PANTHER" id="PTHR21058">
    <property type="entry name" value="6,7-DIMETHYL-8-RIBITYLLUMAZINE SYNTHASE DMRL SYNTHASE LUMAZINE SYNTHASE"/>
    <property type="match status" value="1"/>
</dbReference>
<dbReference type="Pfam" id="PF00885">
    <property type="entry name" value="DMRL_synthase"/>
    <property type="match status" value="1"/>
</dbReference>
<dbReference type="SUPFAM" id="SSF52121">
    <property type="entry name" value="Lumazine synthase"/>
    <property type="match status" value="1"/>
</dbReference>
<keyword id="KW-0686">Riboflavin biosynthesis</keyword>
<keyword id="KW-0808">Transferase</keyword>
<sequence>MKIYEGKLTAEGLKVGIIVSRFNEFITSKLLAGSIDCLKRHGAKEDNIEVCWVPGAFEIPVIAKKMASKGKYDAVICLGAVIRGATPHFDYVSSEVSKGVAHVSLDKEVPVIFGVLTTDTIEQAIERAGTKAGNKGYDAAMSAIEMSNLMKVLD</sequence>
<comment type="function">
    <text evidence="1">Catalyzes the formation of 6,7-dimethyl-8-ribityllumazine by condensation of 5-amino-6-(D-ribitylamino)uracil with 3,4-dihydroxy-2-butanone 4-phosphate. This is the penultimate step in the biosynthesis of riboflavin.</text>
</comment>
<comment type="catalytic activity">
    <reaction evidence="1">
        <text>(2S)-2-hydroxy-3-oxobutyl phosphate + 5-amino-6-(D-ribitylamino)uracil = 6,7-dimethyl-8-(1-D-ribityl)lumazine + phosphate + 2 H2O + H(+)</text>
        <dbReference type="Rhea" id="RHEA:26152"/>
        <dbReference type="ChEBI" id="CHEBI:15377"/>
        <dbReference type="ChEBI" id="CHEBI:15378"/>
        <dbReference type="ChEBI" id="CHEBI:15934"/>
        <dbReference type="ChEBI" id="CHEBI:43474"/>
        <dbReference type="ChEBI" id="CHEBI:58201"/>
        <dbReference type="ChEBI" id="CHEBI:58830"/>
        <dbReference type="EC" id="2.5.1.78"/>
    </reaction>
</comment>
<comment type="pathway">
    <text evidence="1">Cofactor biosynthesis; riboflavin biosynthesis; riboflavin from 2-hydroxy-3-oxobutyl phosphate and 5-amino-6-(D-ribitylamino)uracil: step 1/2.</text>
</comment>
<comment type="similarity">
    <text evidence="1">Belongs to the DMRL synthase family.</text>
</comment>
<protein>
    <recommendedName>
        <fullName evidence="1">6,7-dimethyl-8-ribityllumazine synthase</fullName>
        <shortName evidence="1">DMRL synthase</shortName>
        <shortName evidence="1">LS</shortName>
        <shortName evidence="1">Lumazine synthase</shortName>
        <ecNumber evidence="1">2.5.1.78</ecNumber>
    </recommendedName>
</protein>
<accession>B1IL45</accession>
<proteinExistence type="inferred from homology"/>